<gene>
    <name evidence="1" type="primary">trpS</name>
    <name type="ordered locus">DR_0558</name>
</gene>
<comment type="function">
    <text evidence="1">Catalyzes the attachment of tryptophan to tRNA(Trp).</text>
</comment>
<comment type="catalytic activity">
    <reaction evidence="1">
        <text>tRNA(Trp) + L-tryptophan + ATP = L-tryptophyl-tRNA(Trp) + AMP + diphosphate + H(+)</text>
        <dbReference type="Rhea" id="RHEA:24080"/>
        <dbReference type="Rhea" id="RHEA-COMP:9671"/>
        <dbReference type="Rhea" id="RHEA-COMP:9705"/>
        <dbReference type="ChEBI" id="CHEBI:15378"/>
        <dbReference type="ChEBI" id="CHEBI:30616"/>
        <dbReference type="ChEBI" id="CHEBI:33019"/>
        <dbReference type="ChEBI" id="CHEBI:57912"/>
        <dbReference type="ChEBI" id="CHEBI:78442"/>
        <dbReference type="ChEBI" id="CHEBI:78535"/>
        <dbReference type="ChEBI" id="CHEBI:456215"/>
        <dbReference type="EC" id="6.1.1.2"/>
    </reaction>
</comment>
<comment type="subunit">
    <text evidence="1">Homodimer.</text>
</comment>
<comment type="subcellular location">
    <subcellularLocation>
        <location evidence="1">Cytoplasm</location>
    </subcellularLocation>
</comment>
<comment type="similarity">
    <text evidence="1">Belongs to the class-I aminoacyl-tRNA synthetase family.</text>
</comment>
<name>SYW_DEIRA</name>
<sequence>MSRVFSGIQPTGDPHIGNYFGAMQNYVRLGEQYGKQSLYCVVDLHAITNPGAFDPQTLAQKTFDMAVANFAIGLDPSKVVFFVQSHVPEHQELSWIFTCVTPVGELERMTQYKDKSAQFESVPSGLLMYPALMAADILLYKADIVPVGEDQTQHIELTREIARKFNHNFGETFTEPKAVYNKEALRIPGVDGQGKMSKSKGNTIGILEPFGDIWQKLRVAPTDPARVRRTDPGDPDKCLIGDYHKLFSPPETLETVYQGCRTAGIGCVDCKKMLMTHITEHLDPIQTRAAQLRADPDYVRDALRQGDQEARAIASEVMDEVRQKVGFLKL</sequence>
<keyword id="KW-0030">Aminoacyl-tRNA synthetase</keyword>
<keyword id="KW-0067">ATP-binding</keyword>
<keyword id="KW-0963">Cytoplasm</keyword>
<keyword id="KW-0436">Ligase</keyword>
<keyword id="KW-0547">Nucleotide-binding</keyword>
<keyword id="KW-0648">Protein biosynthesis</keyword>
<keyword id="KW-1185">Reference proteome</keyword>
<reference key="1">
    <citation type="journal article" date="1999" name="Science">
        <title>Genome sequence of the radioresistant bacterium Deinococcus radiodurans R1.</title>
        <authorList>
            <person name="White O."/>
            <person name="Eisen J.A."/>
            <person name="Heidelberg J.F."/>
            <person name="Hickey E.K."/>
            <person name="Peterson J.D."/>
            <person name="Dodson R.J."/>
            <person name="Haft D.H."/>
            <person name="Gwinn M.L."/>
            <person name="Nelson W.C."/>
            <person name="Richardson D.L."/>
            <person name="Moffat K.S."/>
            <person name="Qin H."/>
            <person name="Jiang L."/>
            <person name="Pamphile W."/>
            <person name="Crosby M."/>
            <person name="Shen M."/>
            <person name="Vamathevan J.J."/>
            <person name="Lam P."/>
            <person name="McDonald L.A."/>
            <person name="Utterback T.R."/>
            <person name="Zalewski C."/>
            <person name="Makarova K.S."/>
            <person name="Aravind L."/>
            <person name="Daly M.J."/>
            <person name="Minton K.W."/>
            <person name="Fleischmann R.D."/>
            <person name="Ketchum K.A."/>
            <person name="Nelson K.E."/>
            <person name="Salzberg S.L."/>
            <person name="Smith H.O."/>
            <person name="Venter J.C."/>
            <person name="Fraser C.M."/>
        </authorList>
    </citation>
    <scope>NUCLEOTIDE SEQUENCE [LARGE SCALE GENOMIC DNA]</scope>
    <source>
        <strain>ATCC 13939 / DSM 20539 / JCM 16871 / CCUG 27074 / LMG 4051 / NBRC 15346 / NCIMB 9279 / VKM B-1422 / R1</strain>
    </source>
</reference>
<accession>Q9RWV7</accession>
<dbReference type="EC" id="6.1.1.2" evidence="1"/>
<dbReference type="EMBL" id="AE000513">
    <property type="protein sequence ID" value="AAF10134.1"/>
    <property type="molecule type" value="Genomic_DNA"/>
</dbReference>
<dbReference type="PIR" id="H75505">
    <property type="entry name" value="H75505"/>
</dbReference>
<dbReference type="RefSeq" id="NP_294281.1">
    <property type="nucleotide sequence ID" value="NC_001263.1"/>
</dbReference>
<dbReference type="RefSeq" id="WP_010887203.1">
    <property type="nucleotide sequence ID" value="NC_001263.1"/>
</dbReference>
<dbReference type="SMR" id="Q9RWV7"/>
<dbReference type="FunCoup" id="Q9RWV7">
    <property type="interactions" value="410"/>
</dbReference>
<dbReference type="STRING" id="243230.DR_0558"/>
<dbReference type="PaxDb" id="243230-DR_0558"/>
<dbReference type="EnsemblBacteria" id="AAF10134">
    <property type="protein sequence ID" value="AAF10134"/>
    <property type="gene ID" value="DR_0558"/>
</dbReference>
<dbReference type="GeneID" id="69516796"/>
<dbReference type="KEGG" id="dra:DR_0558"/>
<dbReference type="PATRIC" id="fig|243230.17.peg.733"/>
<dbReference type="eggNOG" id="COG0180">
    <property type="taxonomic scope" value="Bacteria"/>
</dbReference>
<dbReference type="HOGENOM" id="CLU_029244_1_1_0"/>
<dbReference type="InParanoid" id="Q9RWV7"/>
<dbReference type="OrthoDB" id="9801042at2"/>
<dbReference type="Proteomes" id="UP000002524">
    <property type="component" value="Chromosome 1"/>
</dbReference>
<dbReference type="GO" id="GO:0005829">
    <property type="term" value="C:cytosol"/>
    <property type="evidence" value="ECO:0000318"/>
    <property type="project" value="GO_Central"/>
</dbReference>
<dbReference type="GO" id="GO:0005524">
    <property type="term" value="F:ATP binding"/>
    <property type="evidence" value="ECO:0007669"/>
    <property type="project" value="UniProtKB-UniRule"/>
</dbReference>
<dbReference type="GO" id="GO:0004830">
    <property type="term" value="F:tryptophan-tRNA ligase activity"/>
    <property type="evidence" value="ECO:0000318"/>
    <property type="project" value="GO_Central"/>
</dbReference>
<dbReference type="GO" id="GO:0006436">
    <property type="term" value="P:tryptophanyl-tRNA aminoacylation"/>
    <property type="evidence" value="ECO:0000318"/>
    <property type="project" value="GO_Central"/>
</dbReference>
<dbReference type="CDD" id="cd00806">
    <property type="entry name" value="TrpRS_core"/>
    <property type="match status" value="1"/>
</dbReference>
<dbReference type="FunFam" id="1.10.240.10:FF:000005">
    <property type="entry name" value="Tryptophan--tRNA ligase"/>
    <property type="match status" value="1"/>
</dbReference>
<dbReference type="Gene3D" id="3.40.50.620">
    <property type="entry name" value="HUPs"/>
    <property type="match status" value="1"/>
</dbReference>
<dbReference type="Gene3D" id="1.10.240.10">
    <property type="entry name" value="Tyrosyl-Transfer RNA Synthetase"/>
    <property type="match status" value="1"/>
</dbReference>
<dbReference type="HAMAP" id="MF_00140_B">
    <property type="entry name" value="Trp_tRNA_synth_B"/>
    <property type="match status" value="1"/>
</dbReference>
<dbReference type="InterPro" id="IPR001412">
    <property type="entry name" value="aa-tRNA-synth_I_CS"/>
</dbReference>
<dbReference type="InterPro" id="IPR002305">
    <property type="entry name" value="aa-tRNA-synth_Ic"/>
</dbReference>
<dbReference type="InterPro" id="IPR014729">
    <property type="entry name" value="Rossmann-like_a/b/a_fold"/>
</dbReference>
<dbReference type="InterPro" id="IPR002306">
    <property type="entry name" value="Trp-tRNA-ligase"/>
</dbReference>
<dbReference type="InterPro" id="IPR024109">
    <property type="entry name" value="Trp-tRNA-ligase_bac-type"/>
</dbReference>
<dbReference type="InterPro" id="IPR050203">
    <property type="entry name" value="Trp-tRNA_synthetase"/>
</dbReference>
<dbReference type="NCBIfam" id="TIGR00233">
    <property type="entry name" value="trpS"/>
    <property type="match status" value="1"/>
</dbReference>
<dbReference type="PANTHER" id="PTHR43766">
    <property type="entry name" value="TRYPTOPHAN--TRNA LIGASE, MITOCHONDRIAL"/>
    <property type="match status" value="1"/>
</dbReference>
<dbReference type="PANTHER" id="PTHR43766:SF1">
    <property type="entry name" value="TRYPTOPHAN--TRNA LIGASE, MITOCHONDRIAL"/>
    <property type="match status" value="1"/>
</dbReference>
<dbReference type="Pfam" id="PF00579">
    <property type="entry name" value="tRNA-synt_1b"/>
    <property type="match status" value="1"/>
</dbReference>
<dbReference type="PRINTS" id="PR01039">
    <property type="entry name" value="TRNASYNTHTRP"/>
</dbReference>
<dbReference type="SUPFAM" id="SSF52374">
    <property type="entry name" value="Nucleotidylyl transferase"/>
    <property type="match status" value="1"/>
</dbReference>
<dbReference type="PROSITE" id="PS00178">
    <property type="entry name" value="AA_TRNA_LIGASE_I"/>
    <property type="match status" value="1"/>
</dbReference>
<feature type="chain" id="PRO_0000136627" description="Tryptophan--tRNA ligase">
    <location>
        <begin position="1"/>
        <end position="330"/>
    </location>
</feature>
<feature type="short sequence motif" description="'HIGH' region" evidence="1">
    <location>
        <begin position="10"/>
        <end position="18"/>
    </location>
</feature>
<feature type="short sequence motif" description="'KMSKS' region" evidence="1">
    <location>
        <begin position="195"/>
        <end position="199"/>
    </location>
</feature>
<feature type="binding site" evidence="1">
    <location>
        <begin position="9"/>
        <end position="11"/>
    </location>
    <ligand>
        <name>ATP</name>
        <dbReference type="ChEBI" id="CHEBI:30616"/>
    </ligand>
</feature>
<feature type="binding site" evidence="1">
    <location>
        <begin position="17"/>
        <end position="18"/>
    </location>
    <ligand>
        <name>ATP</name>
        <dbReference type="ChEBI" id="CHEBI:30616"/>
    </ligand>
</feature>
<feature type="binding site" evidence="1">
    <location>
        <position position="136"/>
    </location>
    <ligand>
        <name>L-tryptophan</name>
        <dbReference type="ChEBI" id="CHEBI:57912"/>
    </ligand>
</feature>
<feature type="binding site" evidence="1">
    <location>
        <begin position="148"/>
        <end position="150"/>
    </location>
    <ligand>
        <name>ATP</name>
        <dbReference type="ChEBI" id="CHEBI:30616"/>
    </ligand>
</feature>
<feature type="binding site" evidence="1">
    <location>
        <position position="187"/>
    </location>
    <ligand>
        <name>ATP</name>
        <dbReference type="ChEBI" id="CHEBI:30616"/>
    </ligand>
</feature>
<feature type="binding site" evidence="1">
    <location>
        <begin position="195"/>
        <end position="199"/>
    </location>
    <ligand>
        <name>ATP</name>
        <dbReference type="ChEBI" id="CHEBI:30616"/>
    </ligand>
</feature>
<protein>
    <recommendedName>
        <fullName evidence="1">Tryptophan--tRNA ligase</fullName>
        <ecNumber evidence="1">6.1.1.2</ecNumber>
    </recommendedName>
    <alternativeName>
        <fullName evidence="1">Tryptophanyl-tRNA synthetase</fullName>
        <shortName evidence="1">TrpRS</shortName>
    </alternativeName>
</protein>
<evidence type="ECO:0000255" key="1">
    <source>
        <dbReference type="HAMAP-Rule" id="MF_00140"/>
    </source>
</evidence>
<proteinExistence type="inferred from homology"/>
<organism>
    <name type="scientific">Deinococcus radiodurans (strain ATCC 13939 / DSM 20539 / JCM 16871 / CCUG 27074 / LMG 4051 / NBRC 15346 / NCIMB 9279 / VKM B-1422 / R1)</name>
    <dbReference type="NCBI Taxonomy" id="243230"/>
    <lineage>
        <taxon>Bacteria</taxon>
        <taxon>Thermotogati</taxon>
        <taxon>Deinococcota</taxon>
        <taxon>Deinococci</taxon>
        <taxon>Deinococcales</taxon>
        <taxon>Deinococcaceae</taxon>
        <taxon>Deinococcus</taxon>
    </lineage>
</organism>